<keyword id="KW-0963">Cytoplasm</keyword>
<keyword id="KW-0255">Endonuclease</keyword>
<keyword id="KW-0378">Hydrolase</keyword>
<keyword id="KW-0460">Magnesium</keyword>
<keyword id="KW-0479">Metal-binding</keyword>
<keyword id="KW-0507">mRNA processing</keyword>
<keyword id="KW-0540">Nuclease</keyword>
<keyword id="KW-1185">Reference proteome</keyword>
<keyword id="KW-0694">RNA-binding</keyword>
<keyword id="KW-0698">rRNA processing</keyword>
<keyword id="KW-0699">rRNA-binding</keyword>
<keyword id="KW-0819">tRNA processing</keyword>
<accession>B7UH07</accession>
<dbReference type="EC" id="3.1.26.3" evidence="1"/>
<dbReference type="EMBL" id="FM180568">
    <property type="protein sequence ID" value="CAS10392.1"/>
    <property type="molecule type" value="Genomic_DNA"/>
</dbReference>
<dbReference type="RefSeq" id="WP_001068343.1">
    <property type="nucleotide sequence ID" value="NC_011601.1"/>
</dbReference>
<dbReference type="SMR" id="B7UH07"/>
<dbReference type="GeneID" id="93774524"/>
<dbReference type="KEGG" id="ecg:E2348C_2844"/>
<dbReference type="HOGENOM" id="CLU_000907_1_1_6"/>
<dbReference type="Proteomes" id="UP000008205">
    <property type="component" value="Chromosome"/>
</dbReference>
<dbReference type="GO" id="GO:0005737">
    <property type="term" value="C:cytoplasm"/>
    <property type="evidence" value="ECO:0007669"/>
    <property type="project" value="UniProtKB-SubCell"/>
</dbReference>
<dbReference type="GO" id="GO:0003725">
    <property type="term" value="F:double-stranded RNA binding"/>
    <property type="evidence" value="ECO:0007669"/>
    <property type="project" value="TreeGrafter"/>
</dbReference>
<dbReference type="GO" id="GO:0046872">
    <property type="term" value="F:metal ion binding"/>
    <property type="evidence" value="ECO:0007669"/>
    <property type="project" value="UniProtKB-KW"/>
</dbReference>
<dbReference type="GO" id="GO:0004525">
    <property type="term" value="F:ribonuclease III activity"/>
    <property type="evidence" value="ECO:0007669"/>
    <property type="project" value="UniProtKB-UniRule"/>
</dbReference>
<dbReference type="GO" id="GO:0019843">
    <property type="term" value="F:rRNA binding"/>
    <property type="evidence" value="ECO:0007669"/>
    <property type="project" value="UniProtKB-KW"/>
</dbReference>
<dbReference type="GO" id="GO:0006397">
    <property type="term" value="P:mRNA processing"/>
    <property type="evidence" value="ECO:0007669"/>
    <property type="project" value="UniProtKB-UniRule"/>
</dbReference>
<dbReference type="GO" id="GO:0010468">
    <property type="term" value="P:regulation of gene expression"/>
    <property type="evidence" value="ECO:0007669"/>
    <property type="project" value="TreeGrafter"/>
</dbReference>
<dbReference type="GO" id="GO:0006364">
    <property type="term" value="P:rRNA processing"/>
    <property type="evidence" value="ECO:0007669"/>
    <property type="project" value="UniProtKB-UniRule"/>
</dbReference>
<dbReference type="GO" id="GO:0008033">
    <property type="term" value="P:tRNA processing"/>
    <property type="evidence" value="ECO:0007669"/>
    <property type="project" value="UniProtKB-KW"/>
</dbReference>
<dbReference type="CDD" id="cd10845">
    <property type="entry name" value="DSRM_RNAse_III_family"/>
    <property type="match status" value="1"/>
</dbReference>
<dbReference type="CDD" id="cd00593">
    <property type="entry name" value="RIBOc"/>
    <property type="match status" value="1"/>
</dbReference>
<dbReference type="FunFam" id="1.10.1520.10:FF:000001">
    <property type="entry name" value="Ribonuclease 3"/>
    <property type="match status" value="1"/>
</dbReference>
<dbReference type="FunFam" id="3.30.160.20:FF:000003">
    <property type="entry name" value="Ribonuclease 3"/>
    <property type="match status" value="1"/>
</dbReference>
<dbReference type="Gene3D" id="3.30.160.20">
    <property type="match status" value="1"/>
</dbReference>
<dbReference type="Gene3D" id="1.10.1520.10">
    <property type="entry name" value="Ribonuclease III domain"/>
    <property type="match status" value="1"/>
</dbReference>
<dbReference type="HAMAP" id="MF_00104">
    <property type="entry name" value="RNase_III"/>
    <property type="match status" value="1"/>
</dbReference>
<dbReference type="InterPro" id="IPR014720">
    <property type="entry name" value="dsRBD_dom"/>
</dbReference>
<dbReference type="InterPro" id="IPR011907">
    <property type="entry name" value="RNase_III"/>
</dbReference>
<dbReference type="InterPro" id="IPR000999">
    <property type="entry name" value="RNase_III_dom"/>
</dbReference>
<dbReference type="InterPro" id="IPR036389">
    <property type="entry name" value="RNase_III_sf"/>
</dbReference>
<dbReference type="NCBIfam" id="TIGR02191">
    <property type="entry name" value="RNaseIII"/>
    <property type="match status" value="1"/>
</dbReference>
<dbReference type="PANTHER" id="PTHR11207:SF0">
    <property type="entry name" value="RIBONUCLEASE 3"/>
    <property type="match status" value="1"/>
</dbReference>
<dbReference type="PANTHER" id="PTHR11207">
    <property type="entry name" value="RIBONUCLEASE III"/>
    <property type="match status" value="1"/>
</dbReference>
<dbReference type="Pfam" id="PF00035">
    <property type="entry name" value="dsrm"/>
    <property type="match status" value="1"/>
</dbReference>
<dbReference type="Pfam" id="PF14622">
    <property type="entry name" value="Ribonucleas_3_3"/>
    <property type="match status" value="1"/>
</dbReference>
<dbReference type="SMART" id="SM00358">
    <property type="entry name" value="DSRM"/>
    <property type="match status" value="1"/>
</dbReference>
<dbReference type="SMART" id="SM00535">
    <property type="entry name" value="RIBOc"/>
    <property type="match status" value="1"/>
</dbReference>
<dbReference type="SUPFAM" id="SSF54768">
    <property type="entry name" value="dsRNA-binding domain-like"/>
    <property type="match status" value="1"/>
</dbReference>
<dbReference type="SUPFAM" id="SSF69065">
    <property type="entry name" value="RNase III domain-like"/>
    <property type="match status" value="1"/>
</dbReference>
<dbReference type="PROSITE" id="PS50137">
    <property type="entry name" value="DS_RBD"/>
    <property type="match status" value="1"/>
</dbReference>
<dbReference type="PROSITE" id="PS00517">
    <property type="entry name" value="RNASE_3_1"/>
    <property type="match status" value="1"/>
</dbReference>
<dbReference type="PROSITE" id="PS50142">
    <property type="entry name" value="RNASE_3_2"/>
    <property type="match status" value="1"/>
</dbReference>
<protein>
    <recommendedName>
        <fullName evidence="1">Ribonuclease 3</fullName>
        <ecNumber evidence="1">3.1.26.3</ecNumber>
    </recommendedName>
    <alternativeName>
        <fullName evidence="1">Ribonuclease III</fullName>
        <shortName evidence="1">RNase III</shortName>
    </alternativeName>
</protein>
<feature type="chain" id="PRO_1000194423" description="Ribonuclease 3">
    <location>
        <begin position="1"/>
        <end position="226"/>
    </location>
</feature>
<feature type="domain" description="RNase III" evidence="1">
    <location>
        <begin position="6"/>
        <end position="128"/>
    </location>
</feature>
<feature type="domain" description="DRBM" evidence="1">
    <location>
        <begin position="155"/>
        <end position="225"/>
    </location>
</feature>
<feature type="active site" evidence="1">
    <location>
        <position position="45"/>
    </location>
</feature>
<feature type="active site" evidence="1">
    <location>
        <position position="117"/>
    </location>
</feature>
<feature type="binding site" evidence="1">
    <location>
        <position position="41"/>
    </location>
    <ligand>
        <name>Mg(2+)</name>
        <dbReference type="ChEBI" id="CHEBI:18420"/>
    </ligand>
</feature>
<feature type="binding site" evidence="1">
    <location>
        <position position="114"/>
    </location>
    <ligand>
        <name>Mg(2+)</name>
        <dbReference type="ChEBI" id="CHEBI:18420"/>
    </ligand>
</feature>
<feature type="binding site" evidence="1">
    <location>
        <position position="117"/>
    </location>
    <ligand>
        <name>Mg(2+)</name>
        <dbReference type="ChEBI" id="CHEBI:18420"/>
    </ligand>
</feature>
<comment type="function">
    <text evidence="1">Digests double-stranded RNA. Involved in the processing of primary rRNA transcript to yield the immediate precursors to the large and small rRNAs (23S and 16S). Processes some mRNAs, and tRNAs when they are encoded in the rRNA operon. Processes pre-crRNA and tracrRNA of type II CRISPR loci if present in the organism.</text>
</comment>
<comment type="catalytic activity">
    <reaction evidence="1">
        <text>Endonucleolytic cleavage to 5'-phosphomonoester.</text>
        <dbReference type="EC" id="3.1.26.3"/>
    </reaction>
</comment>
<comment type="cofactor">
    <cofactor evidence="1">
        <name>Mg(2+)</name>
        <dbReference type="ChEBI" id="CHEBI:18420"/>
    </cofactor>
</comment>
<comment type="subunit">
    <text evidence="1">Homodimer.</text>
</comment>
<comment type="subcellular location">
    <subcellularLocation>
        <location evidence="1">Cytoplasm</location>
    </subcellularLocation>
</comment>
<comment type="similarity">
    <text evidence="1">Belongs to the ribonuclease III family.</text>
</comment>
<gene>
    <name evidence="1" type="primary">rnc</name>
    <name type="ordered locus">E2348C_2844</name>
</gene>
<reference key="1">
    <citation type="journal article" date="2009" name="J. Bacteriol.">
        <title>Complete genome sequence and comparative genome analysis of enteropathogenic Escherichia coli O127:H6 strain E2348/69.</title>
        <authorList>
            <person name="Iguchi A."/>
            <person name="Thomson N.R."/>
            <person name="Ogura Y."/>
            <person name="Saunders D."/>
            <person name="Ooka T."/>
            <person name="Henderson I.R."/>
            <person name="Harris D."/>
            <person name="Asadulghani M."/>
            <person name="Kurokawa K."/>
            <person name="Dean P."/>
            <person name="Kenny B."/>
            <person name="Quail M.A."/>
            <person name="Thurston S."/>
            <person name="Dougan G."/>
            <person name="Hayashi T."/>
            <person name="Parkhill J."/>
            <person name="Frankel G."/>
        </authorList>
    </citation>
    <scope>NUCLEOTIDE SEQUENCE [LARGE SCALE GENOMIC DNA]</scope>
    <source>
        <strain>E2348/69 / EPEC</strain>
    </source>
</reference>
<sequence length="226" mass="25550">MNPIVINRLQRKLGYTFNHQELLQQALTHRSASSKHNERLEFLGDSILSYVIANALYHRFPRVDEGDMSRMRATLVRGNTLAELAREFELGECLRLGPGELKSGGFRRESILADTVEALIGGVFLDSDIQTVEKLILNWYQTRLDEISPGDKQKDPKTRLQEYLQGRHLPLPTYLVVQVRGEAHDQEFTIHCQVSGLSEPVVGTGSSRRKAEQAAAEQALKKLELE</sequence>
<organism>
    <name type="scientific">Escherichia coli O127:H6 (strain E2348/69 / EPEC)</name>
    <dbReference type="NCBI Taxonomy" id="574521"/>
    <lineage>
        <taxon>Bacteria</taxon>
        <taxon>Pseudomonadati</taxon>
        <taxon>Pseudomonadota</taxon>
        <taxon>Gammaproteobacteria</taxon>
        <taxon>Enterobacterales</taxon>
        <taxon>Enterobacteriaceae</taxon>
        <taxon>Escherichia</taxon>
    </lineage>
</organism>
<proteinExistence type="inferred from homology"/>
<evidence type="ECO:0000255" key="1">
    <source>
        <dbReference type="HAMAP-Rule" id="MF_00104"/>
    </source>
</evidence>
<name>RNC_ECO27</name>